<accession>Q31YM9</accession>
<comment type="function">
    <text evidence="1">Involved in the degradation of certain denaturated proteins, including DnaA, during heat shock stress.</text>
</comment>
<comment type="subcellular location">
    <subcellularLocation>
        <location evidence="1">Cytoplasm</location>
    </subcellularLocation>
</comment>
<comment type="similarity">
    <text evidence="1">Belongs to the HspQ family.</text>
</comment>
<comment type="sequence caution" evidence="3">
    <conflict type="erroneous initiation">
        <sequence resource="EMBL-CDS" id="ABB66829"/>
    </conflict>
</comment>
<dbReference type="EMBL" id="CP000036">
    <property type="protein sequence ID" value="ABB66829.1"/>
    <property type="status" value="ALT_INIT"/>
    <property type="molecule type" value="Genomic_DNA"/>
</dbReference>
<dbReference type="RefSeq" id="WP_001295356.1">
    <property type="nucleotide sequence ID" value="NC_007613.1"/>
</dbReference>
<dbReference type="SMR" id="Q31YM9"/>
<dbReference type="GeneID" id="93776448"/>
<dbReference type="KEGG" id="sbo:SBO_2265"/>
<dbReference type="HOGENOM" id="CLU_123865_1_0_6"/>
<dbReference type="Proteomes" id="UP000007067">
    <property type="component" value="Chromosome"/>
</dbReference>
<dbReference type="GO" id="GO:0005737">
    <property type="term" value="C:cytoplasm"/>
    <property type="evidence" value="ECO:0007669"/>
    <property type="project" value="UniProtKB-SubCell"/>
</dbReference>
<dbReference type="GO" id="GO:0003677">
    <property type="term" value="F:DNA binding"/>
    <property type="evidence" value="ECO:0007669"/>
    <property type="project" value="InterPro"/>
</dbReference>
<dbReference type="GO" id="GO:0009408">
    <property type="term" value="P:response to heat"/>
    <property type="evidence" value="ECO:0007669"/>
    <property type="project" value="UniProtKB-UniRule"/>
</dbReference>
<dbReference type="Gene3D" id="2.30.30.390">
    <property type="entry name" value="Hemimethylated DNA-binding domain"/>
    <property type="match status" value="1"/>
</dbReference>
<dbReference type="HAMAP" id="MF_01194">
    <property type="entry name" value="HspQ"/>
    <property type="match status" value="1"/>
</dbReference>
<dbReference type="InterPro" id="IPR011722">
    <property type="entry name" value="Hemimethylated_DNA-bd_dom"/>
</dbReference>
<dbReference type="InterPro" id="IPR036623">
    <property type="entry name" value="Hemimethylated_DNA-bd_sf"/>
</dbReference>
<dbReference type="InterPro" id="IPR022866">
    <property type="entry name" value="HspQ"/>
</dbReference>
<dbReference type="NCBIfam" id="NF010729">
    <property type="entry name" value="PRK14129.1"/>
    <property type="match status" value="1"/>
</dbReference>
<dbReference type="NCBIfam" id="TIGR02097">
    <property type="entry name" value="yccV"/>
    <property type="match status" value="1"/>
</dbReference>
<dbReference type="Pfam" id="PF08755">
    <property type="entry name" value="YccV-like"/>
    <property type="match status" value="1"/>
</dbReference>
<dbReference type="SMART" id="SM00992">
    <property type="entry name" value="YccV-like"/>
    <property type="match status" value="1"/>
</dbReference>
<dbReference type="SUPFAM" id="SSF141255">
    <property type="entry name" value="YccV-like"/>
    <property type="match status" value="1"/>
</dbReference>
<proteinExistence type="inferred from homology"/>
<keyword id="KW-0963">Cytoplasm</keyword>
<keyword id="KW-0346">Stress response</keyword>
<protein>
    <recommendedName>
        <fullName evidence="1">Heat shock protein HspQ</fullName>
    </recommendedName>
</protein>
<feature type="chain" id="PRO_0000315313" description="Heat shock protein HspQ">
    <location>
        <begin position="1"/>
        <end position="105"/>
    </location>
</feature>
<feature type="region of interest" description="Disordered" evidence="2">
    <location>
        <begin position="75"/>
        <end position="105"/>
    </location>
</feature>
<gene>
    <name evidence="1" type="primary">hspQ</name>
    <name type="ordered locus">SBO_2265</name>
</gene>
<sequence>MIASKFGIGQQVRHSLLGYLGVVVDIDPVYSLSEPSPDELAVNDELRAAPWYHVVMEDDNGLPVHTYLAEAQLSSELQDEHPEQPSMDELAQTIRKQLQAPRLRN</sequence>
<name>HSPQ_SHIBS</name>
<evidence type="ECO:0000255" key="1">
    <source>
        <dbReference type="HAMAP-Rule" id="MF_01194"/>
    </source>
</evidence>
<evidence type="ECO:0000256" key="2">
    <source>
        <dbReference type="SAM" id="MobiDB-lite"/>
    </source>
</evidence>
<evidence type="ECO:0000305" key="3"/>
<reference key="1">
    <citation type="journal article" date="2005" name="Nucleic Acids Res.">
        <title>Genome dynamics and diversity of Shigella species, the etiologic agents of bacillary dysentery.</title>
        <authorList>
            <person name="Yang F."/>
            <person name="Yang J."/>
            <person name="Zhang X."/>
            <person name="Chen L."/>
            <person name="Jiang Y."/>
            <person name="Yan Y."/>
            <person name="Tang X."/>
            <person name="Wang J."/>
            <person name="Xiong Z."/>
            <person name="Dong J."/>
            <person name="Xue Y."/>
            <person name="Zhu Y."/>
            <person name="Xu X."/>
            <person name="Sun L."/>
            <person name="Chen S."/>
            <person name="Nie H."/>
            <person name="Peng J."/>
            <person name="Xu J."/>
            <person name="Wang Y."/>
            <person name="Yuan Z."/>
            <person name="Wen Y."/>
            <person name="Yao Z."/>
            <person name="Shen Y."/>
            <person name="Qiang B."/>
            <person name="Hou Y."/>
            <person name="Yu J."/>
            <person name="Jin Q."/>
        </authorList>
    </citation>
    <scope>NUCLEOTIDE SEQUENCE [LARGE SCALE GENOMIC DNA]</scope>
    <source>
        <strain>Sb227</strain>
    </source>
</reference>
<organism>
    <name type="scientific">Shigella boydii serotype 4 (strain Sb227)</name>
    <dbReference type="NCBI Taxonomy" id="300268"/>
    <lineage>
        <taxon>Bacteria</taxon>
        <taxon>Pseudomonadati</taxon>
        <taxon>Pseudomonadota</taxon>
        <taxon>Gammaproteobacteria</taxon>
        <taxon>Enterobacterales</taxon>
        <taxon>Enterobacteriaceae</taxon>
        <taxon>Shigella</taxon>
    </lineage>
</organism>